<reference key="1">
    <citation type="journal article" date="1996" name="Yeast">
        <title>DNA sequence analysis of the VPH1-SNF2 region on chromosome XV of Saccharomyces cerevisiae.</title>
        <authorList>
            <person name="Cheret G."/>
            <person name="Bernardi A."/>
            <person name="Sor F.J."/>
        </authorList>
    </citation>
    <scope>NUCLEOTIDE SEQUENCE [GENOMIC DNA]</scope>
    <source>
        <strain>ATCC 204508 / S288c</strain>
    </source>
</reference>
<reference key="2">
    <citation type="journal article" date="1997" name="Nature">
        <title>The nucleotide sequence of Saccharomyces cerevisiae chromosome XV.</title>
        <authorList>
            <person name="Dujon B."/>
            <person name="Albermann K."/>
            <person name="Aldea M."/>
            <person name="Alexandraki D."/>
            <person name="Ansorge W."/>
            <person name="Arino J."/>
            <person name="Benes V."/>
            <person name="Bohn C."/>
            <person name="Bolotin-Fukuhara M."/>
            <person name="Bordonne R."/>
            <person name="Boyer J."/>
            <person name="Camasses A."/>
            <person name="Casamayor A."/>
            <person name="Casas C."/>
            <person name="Cheret G."/>
            <person name="Cziepluch C."/>
            <person name="Daignan-Fornier B."/>
            <person name="Dang V.-D."/>
            <person name="de Haan M."/>
            <person name="Delius H."/>
            <person name="Durand P."/>
            <person name="Fairhead C."/>
            <person name="Feldmann H."/>
            <person name="Gaillon L."/>
            <person name="Galisson F."/>
            <person name="Gamo F.-J."/>
            <person name="Gancedo C."/>
            <person name="Goffeau A."/>
            <person name="Goulding S.E."/>
            <person name="Grivell L.A."/>
            <person name="Habbig B."/>
            <person name="Hand N.J."/>
            <person name="Hani J."/>
            <person name="Hattenhorst U."/>
            <person name="Hebling U."/>
            <person name="Hernando Y."/>
            <person name="Herrero E."/>
            <person name="Heumann K."/>
            <person name="Hiesel R."/>
            <person name="Hilger F."/>
            <person name="Hofmann B."/>
            <person name="Hollenberg C.P."/>
            <person name="Hughes B."/>
            <person name="Jauniaux J.-C."/>
            <person name="Kalogeropoulos A."/>
            <person name="Katsoulou C."/>
            <person name="Kordes E."/>
            <person name="Lafuente M.J."/>
            <person name="Landt O."/>
            <person name="Louis E.J."/>
            <person name="Maarse A.C."/>
            <person name="Madania A."/>
            <person name="Mannhaupt G."/>
            <person name="Marck C."/>
            <person name="Martin R.P."/>
            <person name="Mewes H.-W."/>
            <person name="Michaux G."/>
            <person name="Paces V."/>
            <person name="Parle-McDermott A.G."/>
            <person name="Pearson B.M."/>
            <person name="Perrin A."/>
            <person name="Pettersson B."/>
            <person name="Poch O."/>
            <person name="Pohl T.M."/>
            <person name="Poirey R."/>
            <person name="Portetelle D."/>
            <person name="Pujol A."/>
            <person name="Purnelle B."/>
            <person name="Ramezani Rad M."/>
            <person name="Rechmann S."/>
            <person name="Schwager C."/>
            <person name="Schweizer M."/>
            <person name="Sor F."/>
            <person name="Sterky F."/>
            <person name="Tarassov I.A."/>
            <person name="Teodoru C."/>
            <person name="Tettelin H."/>
            <person name="Thierry A."/>
            <person name="Tobiasch E."/>
            <person name="Tzermia M."/>
            <person name="Uhlen M."/>
            <person name="Unseld M."/>
            <person name="Valens M."/>
            <person name="Vandenbol M."/>
            <person name="Vetter I."/>
            <person name="Vlcek C."/>
            <person name="Voet M."/>
            <person name="Volckaert G."/>
            <person name="Voss H."/>
            <person name="Wambutt R."/>
            <person name="Wedler H."/>
            <person name="Wiemann S."/>
            <person name="Winsor B."/>
            <person name="Wolfe K.H."/>
            <person name="Zollner A."/>
            <person name="Zumstein E."/>
            <person name="Kleine K."/>
        </authorList>
    </citation>
    <scope>NUCLEOTIDE SEQUENCE [LARGE SCALE GENOMIC DNA]</scope>
    <source>
        <strain>ATCC 204508 / S288c</strain>
    </source>
</reference>
<reference key="3">
    <citation type="journal article" date="2014" name="G3 (Bethesda)">
        <title>The reference genome sequence of Saccharomyces cerevisiae: Then and now.</title>
        <authorList>
            <person name="Engel S.R."/>
            <person name="Dietrich F.S."/>
            <person name="Fisk D.G."/>
            <person name="Binkley G."/>
            <person name="Balakrishnan R."/>
            <person name="Costanzo M.C."/>
            <person name="Dwight S.S."/>
            <person name="Hitz B.C."/>
            <person name="Karra K."/>
            <person name="Nash R.S."/>
            <person name="Weng S."/>
            <person name="Wong E.D."/>
            <person name="Lloyd P."/>
            <person name="Skrzypek M.S."/>
            <person name="Miyasato S.R."/>
            <person name="Simison M."/>
            <person name="Cherry J.M."/>
        </authorList>
    </citation>
    <scope>GENOME REANNOTATION</scope>
    <source>
        <strain>ATCC 204508 / S288c</strain>
    </source>
</reference>
<reference key="4">
    <citation type="journal article" date="2003" name="Nature">
        <title>Global analysis of protein localization in budding yeast.</title>
        <authorList>
            <person name="Huh W.-K."/>
            <person name="Falvo J.V."/>
            <person name="Gerke L.C."/>
            <person name="Carroll A.S."/>
            <person name="Howson R.W."/>
            <person name="Weissman J.S."/>
            <person name="O'Shea E.K."/>
        </authorList>
    </citation>
    <scope>SUBCELLULAR LOCATION [LARGE SCALE ANALYSIS]</scope>
</reference>
<reference key="5">
    <citation type="journal article" date="2003" name="Nature">
        <title>Global analysis of protein expression in yeast.</title>
        <authorList>
            <person name="Ghaemmaghami S."/>
            <person name="Huh W.-K."/>
            <person name="Bower K."/>
            <person name="Howson R.W."/>
            <person name="Belle A."/>
            <person name="Dephoure N."/>
            <person name="O'Shea E.K."/>
            <person name="Weissman J.S."/>
        </authorList>
    </citation>
    <scope>LEVEL OF PROTEIN EXPRESSION [LARGE SCALE ANALYSIS]</scope>
</reference>
<reference key="6">
    <citation type="journal article" date="2003" name="Proc. Natl. Acad. Sci. U.S.A.">
        <title>Predicting protein functions from redundancies in large-scale protein interaction networks.</title>
        <authorList>
            <person name="Samanta M.P."/>
            <person name="Liang S."/>
        </authorList>
    </citation>
    <scope>FUNCTION</scope>
</reference>
<feature type="chain" id="PRO_0000270558" description="Protein HUA2">
    <location>
        <begin position="1"/>
        <end position="243"/>
    </location>
</feature>
<accession>Q12134</accession>
<accession>D6W2Y2</accession>
<keyword id="KW-0963">Cytoplasm</keyword>
<keyword id="KW-1185">Reference proteome</keyword>
<dbReference type="EMBL" id="X89633">
    <property type="protein sequence ID" value="CAA61788.1"/>
    <property type="molecule type" value="Genomic_DNA"/>
</dbReference>
<dbReference type="EMBL" id="Z75192">
    <property type="protein sequence ID" value="CAA99511.1"/>
    <property type="molecule type" value="Genomic_DNA"/>
</dbReference>
<dbReference type="EMBL" id="BK006948">
    <property type="protein sequence ID" value="DAA11048.1"/>
    <property type="molecule type" value="Genomic_DNA"/>
</dbReference>
<dbReference type="PIR" id="S67186">
    <property type="entry name" value="S67186"/>
</dbReference>
<dbReference type="RefSeq" id="NP_014927.3">
    <property type="nucleotide sequence ID" value="NM_001183703.3"/>
</dbReference>
<dbReference type="SMR" id="Q12134"/>
<dbReference type="BioGRID" id="34671">
    <property type="interactions" value="60"/>
</dbReference>
<dbReference type="DIP" id="DIP-1472N"/>
<dbReference type="FunCoup" id="Q12134">
    <property type="interactions" value="78"/>
</dbReference>
<dbReference type="IntAct" id="Q12134">
    <property type="interactions" value="25"/>
</dbReference>
<dbReference type="MINT" id="Q12134"/>
<dbReference type="STRING" id="4932.YOR284W"/>
<dbReference type="iPTMnet" id="Q12134"/>
<dbReference type="PaxDb" id="4932-YOR284W"/>
<dbReference type="PeptideAtlas" id="Q12134"/>
<dbReference type="EnsemblFungi" id="YOR284W_mRNA">
    <property type="protein sequence ID" value="YOR284W"/>
    <property type="gene ID" value="YOR284W"/>
</dbReference>
<dbReference type="GeneID" id="854458"/>
<dbReference type="KEGG" id="sce:YOR284W"/>
<dbReference type="AGR" id="SGD:S000005810"/>
<dbReference type="SGD" id="S000005810">
    <property type="gene designation" value="HUA2"/>
</dbReference>
<dbReference type="VEuPathDB" id="FungiDB:YOR284W"/>
<dbReference type="HOGENOM" id="CLU_1143319_0_0_1"/>
<dbReference type="InParanoid" id="Q12134"/>
<dbReference type="OMA" id="CKRSTHQ"/>
<dbReference type="OrthoDB" id="4047580at2759"/>
<dbReference type="BioCyc" id="YEAST:G3O-33770-MONOMER"/>
<dbReference type="BioGRID-ORCS" id="854458">
    <property type="hits" value="0 hits in 10 CRISPR screens"/>
</dbReference>
<dbReference type="PRO" id="PR:Q12134"/>
<dbReference type="Proteomes" id="UP000002311">
    <property type="component" value="Chromosome XV"/>
</dbReference>
<dbReference type="RNAct" id="Q12134">
    <property type="molecule type" value="protein"/>
</dbReference>
<dbReference type="GO" id="GO:0005737">
    <property type="term" value="C:cytoplasm"/>
    <property type="evidence" value="ECO:0007005"/>
    <property type="project" value="SGD"/>
</dbReference>
<proteinExistence type="evidence at protein level"/>
<name>HUA2_YEAST</name>
<protein>
    <recommendedName>
        <fullName>Protein HUA2</fullName>
    </recommendedName>
</protein>
<sequence>MQQTKFGKMYLDHDSVVEYSEDEIVEADRITLGYKKRLSMIENQMRHLLEDFSLDVQQIEPILADLQKYYDAFLQLLQKRNKSLQCKRSTHQPVPSPMNSQTSTNAKVNLSGKLMKFQLNSVQKFDEENILRILQNKIEFEHYFQIDKGKKQKVLLLAVYQCLNGPTRLHKVLNIEGIIHNNSIRTILGKQVSSSKWTVFLYDVKLVLLAHRQDVPNLETSKMIVRYGDLFPCALYFKDHTAY</sequence>
<organism>
    <name type="scientific">Saccharomyces cerevisiae (strain ATCC 204508 / S288c)</name>
    <name type="common">Baker's yeast</name>
    <dbReference type="NCBI Taxonomy" id="559292"/>
    <lineage>
        <taxon>Eukaryota</taxon>
        <taxon>Fungi</taxon>
        <taxon>Dikarya</taxon>
        <taxon>Ascomycota</taxon>
        <taxon>Saccharomycotina</taxon>
        <taxon>Saccharomycetes</taxon>
        <taxon>Saccharomycetales</taxon>
        <taxon>Saccharomycetaceae</taxon>
        <taxon>Saccharomyces</taxon>
    </lineage>
</organism>
<comment type="function">
    <text evidence="3">May have a role in actin patch assembly.</text>
</comment>
<comment type="interaction">
    <interactant intactId="EBI-37262">
        <id>Q12134</id>
    </interactant>
    <interactant intactId="EBI-2036">
        <id>P15891</id>
        <label>ABP1</label>
    </interactant>
    <organismsDiffer>false</organismsDiffer>
    <experiments>4</experiments>
</comment>
<comment type="subcellular location">
    <subcellularLocation>
        <location evidence="1">Cytoplasm</location>
    </subcellularLocation>
</comment>
<comment type="miscellaneous">
    <text evidence="2">Present with 1360 molecules/cell in log phase SD medium.</text>
</comment>
<gene>
    <name type="primary">HUA2</name>
    <name type="ordered locus">YOR284W</name>
</gene>
<evidence type="ECO:0000269" key="1">
    <source>
    </source>
</evidence>
<evidence type="ECO:0000269" key="2">
    <source>
    </source>
</evidence>
<evidence type="ECO:0000269" key="3">
    <source>
    </source>
</evidence>